<keyword id="KW-0963">Cytoplasm</keyword>
<keyword id="KW-0227">DNA damage</keyword>
<keyword id="KW-0233">DNA recombination</keyword>
<keyword id="KW-0234">DNA repair</keyword>
<keyword id="KW-0238">DNA-binding</keyword>
<keyword id="KW-1185">Reference proteome</keyword>
<accession>Q8DRE8</accession>
<dbReference type="EMBL" id="AE007317">
    <property type="protein sequence ID" value="AAK98969.1"/>
    <property type="molecule type" value="Genomic_DNA"/>
</dbReference>
<dbReference type="PIR" id="E97892">
    <property type="entry name" value="E97892"/>
</dbReference>
<dbReference type="RefSeq" id="NP_357759.1">
    <property type="nucleotide sequence ID" value="NC_003098.1"/>
</dbReference>
<dbReference type="RefSeq" id="WP_000271489.1">
    <property type="nucleotide sequence ID" value="NC_003098.1"/>
</dbReference>
<dbReference type="SMR" id="Q8DRE8"/>
<dbReference type="STRING" id="171101.spr0165"/>
<dbReference type="KEGG" id="spr:spr0165"/>
<dbReference type="PATRIC" id="fig|171101.6.peg.195"/>
<dbReference type="eggNOG" id="COG0632">
    <property type="taxonomic scope" value="Bacteria"/>
</dbReference>
<dbReference type="HOGENOM" id="CLU_087936_1_0_9"/>
<dbReference type="Proteomes" id="UP000000586">
    <property type="component" value="Chromosome"/>
</dbReference>
<dbReference type="GO" id="GO:0005737">
    <property type="term" value="C:cytoplasm"/>
    <property type="evidence" value="ECO:0007669"/>
    <property type="project" value="UniProtKB-SubCell"/>
</dbReference>
<dbReference type="GO" id="GO:0009379">
    <property type="term" value="C:Holliday junction helicase complex"/>
    <property type="evidence" value="ECO:0007669"/>
    <property type="project" value="InterPro"/>
</dbReference>
<dbReference type="GO" id="GO:0048476">
    <property type="term" value="C:Holliday junction resolvase complex"/>
    <property type="evidence" value="ECO:0007669"/>
    <property type="project" value="UniProtKB-UniRule"/>
</dbReference>
<dbReference type="GO" id="GO:0005524">
    <property type="term" value="F:ATP binding"/>
    <property type="evidence" value="ECO:0007669"/>
    <property type="project" value="InterPro"/>
</dbReference>
<dbReference type="GO" id="GO:0000400">
    <property type="term" value="F:four-way junction DNA binding"/>
    <property type="evidence" value="ECO:0007669"/>
    <property type="project" value="UniProtKB-UniRule"/>
</dbReference>
<dbReference type="GO" id="GO:0009378">
    <property type="term" value="F:four-way junction helicase activity"/>
    <property type="evidence" value="ECO:0000318"/>
    <property type="project" value="GO_Central"/>
</dbReference>
<dbReference type="GO" id="GO:0006310">
    <property type="term" value="P:DNA recombination"/>
    <property type="evidence" value="ECO:0007669"/>
    <property type="project" value="UniProtKB-UniRule"/>
</dbReference>
<dbReference type="GO" id="GO:0006281">
    <property type="term" value="P:DNA repair"/>
    <property type="evidence" value="ECO:0007669"/>
    <property type="project" value="UniProtKB-UniRule"/>
</dbReference>
<dbReference type="GO" id="GO:0009432">
    <property type="term" value="P:SOS response"/>
    <property type="evidence" value="ECO:0000318"/>
    <property type="project" value="GO_Central"/>
</dbReference>
<dbReference type="CDD" id="cd14332">
    <property type="entry name" value="UBA_RuvA_C"/>
    <property type="match status" value="1"/>
</dbReference>
<dbReference type="Gene3D" id="1.10.150.20">
    <property type="entry name" value="5' to 3' exonuclease, C-terminal subdomain"/>
    <property type="match status" value="1"/>
</dbReference>
<dbReference type="Gene3D" id="1.10.8.10">
    <property type="entry name" value="DNA helicase RuvA subunit, C-terminal domain"/>
    <property type="match status" value="1"/>
</dbReference>
<dbReference type="Gene3D" id="2.40.50.140">
    <property type="entry name" value="Nucleic acid-binding proteins"/>
    <property type="match status" value="1"/>
</dbReference>
<dbReference type="HAMAP" id="MF_00031">
    <property type="entry name" value="DNA_HJ_migration_RuvA"/>
    <property type="match status" value="1"/>
</dbReference>
<dbReference type="InterPro" id="IPR013849">
    <property type="entry name" value="DNA_helicase_Holl-junc_RuvA_I"/>
</dbReference>
<dbReference type="InterPro" id="IPR003583">
    <property type="entry name" value="Hlx-hairpin-Hlx_DNA-bd_motif"/>
</dbReference>
<dbReference type="InterPro" id="IPR012340">
    <property type="entry name" value="NA-bd_OB-fold"/>
</dbReference>
<dbReference type="InterPro" id="IPR000085">
    <property type="entry name" value="RuvA"/>
</dbReference>
<dbReference type="InterPro" id="IPR010994">
    <property type="entry name" value="RuvA_2-like"/>
</dbReference>
<dbReference type="InterPro" id="IPR011114">
    <property type="entry name" value="RuvA_C"/>
</dbReference>
<dbReference type="InterPro" id="IPR036267">
    <property type="entry name" value="RuvA_C_sf"/>
</dbReference>
<dbReference type="NCBIfam" id="TIGR00084">
    <property type="entry name" value="ruvA"/>
    <property type="match status" value="1"/>
</dbReference>
<dbReference type="Pfam" id="PF14520">
    <property type="entry name" value="HHH_5"/>
    <property type="match status" value="1"/>
</dbReference>
<dbReference type="Pfam" id="PF07499">
    <property type="entry name" value="RuvA_C"/>
    <property type="match status" value="1"/>
</dbReference>
<dbReference type="Pfam" id="PF01330">
    <property type="entry name" value="RuvA_N"/>
    <property type="match status" value="1"/>
</dbReference>
<dbReference type="SMART" id="SM00278">
    <property type="entry name" value="HhH1"/>
    <property type="match status" value="2"/>
</dbReference>
<dbReference type="SUPFAM" id="SSF46929">
    <property type="entry name" value="DNA helicase RuvA subunit, C-terminal domain"/>
    <property type="match status" value="1"/>
</dbReference>
<dbReference type="SUPFAM" id="SSF50249">
    <property type="entry name" value="Nucleic acid-binding proteins"/>
    <property type="match status" value="1"/>
</dbReference>
<dbReference type="SUPFAM" id="SSF47781">
    <property type="entry name" value="RuvA domain 2-like"/>
    <property type="match status" value="1"/>
</dbReference>
<feature type="chain" id="PRO_0000094692" description="Holliday junction branch migration complex subunit RuvA">
    <location>
        <begin position="1"/>
        <end position="197"/>
    </location>
</feature>
<feature type="region of interest" description="Domain I" evidence="1">
    <location>
        <begin position="1"/>
        <end position="63"/>
    </location>
</feature>
<feature type="region of interest" description="Domain II" evidence="1">
    <location>
        <begin position="64"/>
        <end position="142"/>
    </location>
</feature>
<feature type="region of interest" description="Flexible linker" evidence="1">
    <location>
        <begin position="143"/>
        <end position="147"/>
    </location>
</feature>
<feature type="region of interest" description="Domain III" evidence="1">
    <location>
        <begin position="148"/>
        <end position="197"/>
    </location>
</feature>
<comment type="function">
    <text evidence="1">The RuvA-RuvB-RuvC complex processes Holliday junction (HJ) DNA during genetic recombination and DNA repair, while the RuvA-RuvB complex plays an important role in the rescue of blocked DNA replication forks via replication fork reversal (RFR). RuvA specifically binds to HJ cruciform DNA, conferring on it an open structure. The RuvB hexamer acts as an ATP-dependent pump, pulling dsDNA into and through the RuvAB complex. HJ branch migration allows RuvC to scan DNA until it finds its consensus sequence, where it cleaves and resolves the cruciform DNA.</text>
</comment>
<comment type="subunit">
    <text evidence="1">Homotetramer. Forms an RuvA(8)-RuvB(12)-Holliday junction (HJ) complex. HJ DNA is sandwiched between 2 RuvA tetramers; dsDNA enters through RuvA and exits via RuvB. An RuvB hexamer assembles on each DNA strand where it exits the tetramer. Each RuvB hexamer is contacted by two RuvA subunits (via domain III) on 2 adjacent RuvB subunits; this complex drives branch migration. In the full resolvosome a probable DNA-RuvA(4)-RuvB(12)-RuvC(2) complex forms which resolves the HJ.</text>
</comment>
<comment type="subcellular location">
    <subcellularLocation>
        <location evidence="1">Cytoplasm</location>
    </subcellularLocation>
</comment>
<comment type="domain">
    <text evidence="1">Has three domains with a flexible linker between the domains II and III and assumes an 'L' shape. Domain III is highly mobile and contacts RuvB.</text>
</comment>
<comment type="similarity">
    <text evidence="1">Belongs to the RuvA family.</text>
</comment>
<gene>
    <name evidence="1" type="primary">ruvA</name>
    <name type="ordered locus">spr0165</name>
</gene>
<sequence>MYAYLKGIITKITAKYIVLETNGIGYILHVANPYAYSGQVNQEAQIYVHQVVREDAHLLYGFRSEDEKKLFLSLISVSGIGPVSALAIIAADDNAGLVQAIETKNITYLTKFPKIGKKTAQQMVLDLEGKVVVAGDGLPAKVAVQASAENQELEEAMEAMLALGYKATELKKIKKFFEGTTDTAENYIKSALKMLVK</sequence>
<name>RUVA_STRR6</name>
<organism>
    <name type="scientific">Streptococcus pneumoniae (strain ATCC BAA-255 / R6)</name>
    <dbReference type="NCBI Taxonomy" id="171101"/>
    <lineage>
        <taxon>Bacteria</taxon>
        <taxon>Bacillati</taxon>
        <taxon>Bacillota</taxon>
        <taxon>Bacilli</taxon>
        <taxon>Lactobacillales</taxon>
        <taxon>Streptococcaceae</taxon>
        <taxon>Streptococcus</taxon>
    </lineage>
</organism>
<reference key="1">
    <citation type="journal article" date="2001" name="J. Bacteriol.">
        <title>Genome of the bacterium Streptococcus pneumoniae strain R6.</title>
        <authorList>
            <person name="Hoskins J."/>
            <person name="Alborn W.E. Jr."/>
            <person name="Arnold J."/>
            <person name="Blaszczak L.C."/>
            <person name="Burgett S."/>
            <person name="DeHoff B.S."/>
            <person name="Estrem S.T."/>
            <person name="Fritz L."/>
            <person name="Fu D.-J."/>
            <person name="Fuller W."/>
            <person name="Geringer C."/>
            <person name="Gilmour R."/>
            <person name="Glass J.S."/>
            <person name="Khoja H."/>
            <person name="Kraft A.R."/>
            <person name="Lagace R.E."/>
            <person name="LeBlanc D.J."/>
            <person name="Lee L.N."/>
            <person name="Lefkowitz E.J."/>
            <person name="Lu J."/>
            <person name="Matsushima P."/>
            <person name="McAhren S.M."/>
            <person name="McHenney M."/>
            <person name="McLeaster K."/>
            <person name="Mundy C.W."/>
            <person name="Nicas T.I."/>
            <person name="Norris F.H."/>
            <person name="O'Gara M."/>
            <person name="Peery R.B."/>
            <person name="Robertson G.T."/>
            <person name="Rockey P."/>
            <person name="Sun P.-M."/>
            <person name="Winkler M.E."/>
            <person name="Yang Y."/>
            <person name="Young-Bellido M."/>
            <person name="Zhao G."/>
            <person name="Zook C.A."/>
            <person name="Baltz R.H."/>
            <person name="Jaskunas S.R."/>
            <person name="Rosteck P.R. Jr."/>
            <person name="Skatrud P.L."/>
            <person name="Glass J.I."/>
        </authorList>
    </citation>
    <scope>NUCLEOTIDE SEQUENCE [LARGE SCALE GENOMIC DNA]</scope>
    <source>
        <strain>ATCC BAA-255 / R6</strain>
    </source>
</reference>
<proteinExistence type="inferred from homology"/>
<protein>
    <recommendedName>
        <fullName evidence="1">Holliday junction branch migration complex subunit RuvA</fullName>
    </recommendedName>
</protein>
<evidence type="ECO:0000255" key="1">
    <source>
        <dbReference type="HAMAP-Rule" id="MF_00031"/>
    </source>
</evidence>